<sequence length="123" mass="12550">MADVAKLCDELLALTILEAKELNDLLEEKGIKAAAAVAVAGPAGGGDAPAAEEKDEFDVVLTGAGDKKINVIKEVRAITGLGLKEAKDLVEGAPKAVKEAASKTEAEEIKAKLEAAGASVELK</sequence>
<keyword id="KW-1185">Reference proteome</keyword>
<keyword id="KW-0687">Ribonucleoprotein</keyword>
<keyword id="KW-0689">Ribosomal protein</keyword>
<reference key="1">
    <citation type="submission" date="2006-08" db="EMBL/GenBank/DDBJ databases">
        <title>Complete sequence of Maricaulis maris MCS10.</title>
        <authorList>
            <consortium name="US DOE Joint Genome Institute"/>
            <person name="Copeland A."/>
            <person name="Lucas S."/>
            <person name="Lapidus A."/>
            <person name="Barry K."/>
            <person name="Detter J.C."/>
            <person name="Glavina del Rio T."/>
            <person name="Hammon N."/>
            <person name="Israni S."/>
            <person name="Dalin E."/>
            <person name="Tice H."/>
            <person name="Pitluck S."/>
            <person name="Saunders E."/>
            <person name="Brettin T."/>
            <person name="Bruce D."/>
            <person name="Han C."/>
            <person name="Tapia R."/>
            <person name="Gilna P."/>
            <person name="Schmutz J."/>
            <person name="Larimer F."/>
            <person name="Land M."/>
            <person name="Hauser L."/>
            <person name="Kyrpides N."/>
            <person name="Mikhailova N."/>
            <person name="Viollier P."/>
            <person name="Stephens C."/>
            <person name="Richardson P."/>
        </authorList>
    </citation>
    <scope>NUCLEOTIDE SEQUENCE [LARGE SCALE GENOMIC DNA]</scope>
    <source>
        <strain>MCS10</strain>
    </source>
</reference>
<protein>
    <recommendedName>
        <fullName evidence="1">Large ribosomal subunit protein bL12</fullName>
    </recommendedName>
    <alternativeName>
        <fullName evidence="2">50S ribosomal protein L7/L12</fullName>
    </alternativeName>
</protein>
<feature type="chain" id="PRO_1000007038" description="Large ribosomal subunit protein bL12">
    <location>
        <begin position="1"/>
        <end position="123"/>
    </location>
</feature>
<accession>Q0ANP2</accession>
<proteinExistence type="inferred from homology"/>
<dbReference type="EMBL" id="CP000449">
    <property type="protein sequence ID" value="ABI66095.1"/>
    <property type="molecule type" value="Genomic_DNA"/>
</dbReference>
<dbReference type="RefSeq" id="WP_011643741.1">
    <property type="nucleotide sequence ID" value="NC_008347.1"/>
</dbReference>
<dbReference type="SMR" id="Q0ANP2"/>
<dbReference type="STRING" id="394221.Mmar10_1803"/>
<dbReference type="KEGG" id="mmr:Mmar10_1803"/>
<dbReference type="eggNOG" id="COG0222">
    <property type="taxonomic scope" value="Bacteria"/>
</dbReference>
<dbReference type="HOGENOM" id="CLU_086499_3_0_5"/>
<dbReference type="OrthoDB" id="9811748at2"/>
<dbReference type="Proteomes" id="UP000001964">
    <property type="component" value="Chromosome"/>
</dbReference>
<dbReference type="GO" id="GO:0022625">
    <property type="term" value="C:cytosolic large ribosomal subunit"/>
    <property type="evidence" value="ECO:0007669"/>
    <property type="project" value="TreeGrafter"/>
</dbReference>
<dbReference type="GO" id="GO:0003729">
    <property type="term" value="F:mRNA binding"/>
    <property type="evidence" value="ECO:0007669"/>
    <property type="project" value="TreeGrafter"/>
</dbReference>
<dbReference type="GO" id="GO:0003735">
    <property type="term" value="F:structural constituent of ribosome"/>
    <property type="evidence" value="ECO:0007669"/>
    <property type="project" value="InterPro"/>
</dbReference>
<dbReference type="GO" id="GO:0006412">
    <property type="term" value="P:translation"/>
    <property type="evidence" value="ECO:0007669"/>
    <property type="project" value="UniProtKB-UniRule"/>
</dbReference>
<dbReference type="CDD" id="cd00387">
    <property type="entry name" value="Ribosomal_L7_L12"/>
    <property type="match status" value="1"/>
</dbReference>
<dbReference type="FunFam" id="3.30.1390.10:FF:000001">
    <property type="entry name" value="50S ribosomal protein L7/L12"/>
    <property type="match status" value="1"/>
</dbReference>
<dbReference type="Gene3D" id="3.30.1390.10">
    <property type="match status" value="1"/>
</dbReference>
<dbReference type="Gene3D" id="1.20.5.710">
    <property type="entry name" value="Single helix bin"/>
    <property type="match status" value="1"/>
</dbReference>
<dbReference type="HAMAP" id="MF_00368">
    <property type="entry name" value="Ribosomal_bL12"/>
    <property type="match status" value="1"/>
</dbReference>
<dbReference type="InterPro" id="IPR000206">
    <property type="entry name" value="Ribosomal_bL12"/>
</dbReference>
<dbReference type="InterPro" id="IPR013823">
    <property type="entry name" value="Ribosomal_bL12_C"/>
</dbReference>
<dbReference type="InterPro" id="IPR014719">
    <property type="entry name" value="Ribosomal_bL12_C/ClpS-like"/>
</dbReference>
<dbReference type="InterPro" id="IPR008932">
    <property type="entry name" value="Ribosomal_bL12_oligo"/>
</dbReference>
<dbReference type="InterPro" id="IPR036235">
    <property type="entry name" value="Ribosomal_bL12_oligo_N_sf"/>
</dbReference>
<dbReference type="NCBIfam" id="TIGR00855">
    <property type="entry name" value="L12"/>
    <property type="match status" value="1"/>
</dbReference>
<dbReference type="PANTHER" id="PTHR45987">
    <property type="entry name" value="39S RIBOSOMAL PROTEIN L12"/>
    <property type="match status" value="1"/>
</dbReference>
<dbReference type="PANTHER" id="PTHR45987:SF4">
    <property type="entry name" value="LARGE RIBOSOMAL SUBUNIT PROTEIN BL12M"/>
    <property type="match status" value="1"/>
</dbReference>
<dbReference type="Pfam" id="PF00542">
    <property type="entry name" value="Ribosomal_L12"/>
    <property type="match status" value="1"/>
</dbReference>
<dbReference type="Pfam" id="PF16320">
    <property type="entry name" value="Ribosomal_L12_N"/>
    <property type="match status" value="1"/>
</dbReference>
<dbReference type="SUPFAM" id="SSF54736">
    <property type="entry name" value="ClpS-like"/>
    <property type="match status" value="1"/>
</dbReference>
<dbReference type="SUPFAM" id="SSF48300">
    <property type="entry name" value="Ribosomal protein L7/12, oligomerisation (N-terminal) domain"/>
    <property type="match status" value="1"/>
</dbReference>
<gene>
    <name evidence="1" type="primary">rplL</name>
    <name type="ordered locus">Mmar10_1803</name>
</gene>
<evidence type="ECO:0000255" key="1">
    <source>
        <dbReference type="HAMAP-Rule" id="MF_00368"/>
    </source>
</evidence>
<evidence type="ECO:0000305" key="2"/>
<organism>
    <name type="scientific">Maricaulis maris (strain MCS10)</name>
    <name type="common">Caulobacter maris</name>
    <dbReference type="NCBI Taxonomy" id="394221"/>
    <lineage>
        <taxon>Bacteria</taxon>
        <taxon>Pseudomonadati</taxon>
        <taxon>Pseudomonadota</taxon>
        <taxon>Alphaproteobacteria</taxon>
        <taxon>Maricaulales</taxon>
        <taxon>Maricaulaceae</taxon>
        <taxon>Maricaulis</taxon>
    </lineage>
</organism>
<comment type="function">
    <text evidence="1">Forms part of the ribosomal stalk which helps the ribosome interact with GTP-bound translation factors. Is thus essential for accurate translation.</text>
</comment>
<comment type="subunit">
    <text evidence="1">Homodimer. Part of the ribosomal stalk of the 50S ribosomal subunit. Forms a multimeric L10(L12)X complex, where L10 forms an elongated spine to which 2 to 4 L12 dimers bind in a sequential fashion. Binds GTP-bound translation factors.</text>
</comment>
<comment type="similarity">
    <text evidence="1">Belongs to the bacterial ribosomal protein bL12 family.</text>
</comment>
<name>RL7_MARMM</name>